<dbReference type="EC" id="2.5.1.3" evidence="1"/>
<dbReference type="EMBL" id="CP000786">
    <property type="protein sequence ID" value="ABZ98793.1"/>
    <property type="molecule type" value="Genomic_DNA"/>
</dbReference>
<dbReference type="RefSeq" id="WP_012389653.1">
    <property type="nucleotide sequence ID" value="NC_010602.1"/>
</dbReference>
<dbReference type="SMR" id="B0SMR9"/>
<dbReference type="STRING" id="456481.LEPBI_I2715"/>
<dbReference type="KEGG" id="lbi:LEPBI_I2715"/>
<dbReference type="HOGENOM" id="CLU_018272_3_2_12"/>
<dbReference type="OrthoDB" id="9812206at2"/>
<dbReference type="BioCyc" id="LBIF456481:LEPBI_RS13350-MONOMER"/>
<dbReference type="UniPathway" id="UPA00060">
    <property type="reaction ID" value="UER00141"/>
</dbReference>
<dbReference type="Proteomes" id="UP000001847">
    <property type="component" value="Chromosome I"/>
</dbReference>
<dbReference type="GO" id="GO:0005737">
    <property type="term" value="C:cytoplasm"/>
    <property type="evidence" value="ECO:0007669"/>
    <property type="project" value="TreeGrafter"/>
</dbReference>
<dbReference type="GO" id="GO:0000287">
    <property type="term" value="F:magnesium ion binding"/>
    <property type="evidence" value="ECO:0007669"/>
    <property type="project" value="UniProtKB-UniRule"/>
</dbReference>
<dbReference type="GO" id="GO:0004789">
    <property type="term" value="F:thiamine-phosphate diphosphorylase activity"/>
    <property type="evidence" value="ECO:0007669"/>
    <property type="project" value="UniProtKB-UniRule"/>
</dbReference>
<dbReference type="GO" id="GO:0009228">
    <property type="term" value="P:thiamine biosynthetic process"/>
    <property type="evidence" value="ECO:0007669"/>
    <property type="project" value="UniProtKB-KW"/>
</dbReference>
<dbReference type="GO" id="GO:0009229">
    <property type="term" value="P:thiamine diphosphate biosynthetic process"/>
    <property type="evidence" value="ECO:0007669"/>
    <property type="project" value="UniProtKB-UniRule"/>
</dbReference>
<dbReference type="CDD" id="cd00564">
    <property type="entry name" value="TMP_TenI"/>
    <property type="match status" value="1"/>
</dbReference>
<dbReference type="FunFam" id="3.20.20.70:FF:000096">
    <property type="entry name" value="Thiamine-phosphate synthase"/>
    <property type="match status" value="1"/>
</dbReference>
<dbReference type="Gene3D" id="3.20.20.70">
    <property type="entry name" value="Aldolase class I"/>
    <property type="match status" value="1"/>
</dbReference>
<dbReference type="HAMAP" id="MF_00097">
    <property type="entry name" value="TMP_synthase"/>
    <property type="match status" value="1"/>
</dbReference>
<dbReference type="InterPro" id="IPR013785">
    <property type="entry name" value="Aldolase_TIM"/>
</dbReference>
<dbReference type="InterPro" id="IPR036206">
    <property type="entry name" value="ThiamineP_synth_sf"/>
</dbReference>
<dbReference type="InterPro" id="IPR022998">
    <property type="entry name" value="ThiamineP_synth_TenI"/>
</dbReference>
<dbReference type="InterPro" id="IPR034291">
    <property type="entry name" value="TMP_synthase"/>
</dbReference>
<dbReference type="NCBIfam" id="TIGR00693">
    <property type="entry name" value="thiE"/>
    <property type="match status" value="1"/>
</dbReference>
<dbReference type="PANTHER" id="PTHR20857:SF23">
    <property type="entry name" value="THIAMINE BIOSYNTHETIC BIFUNCTIONAL ENZYME"/>
    <property type="match status" value="1"/>
</dbReference>
<dbReference type="PANTHER" id="PTHR20857">
    <property type="entry name" value="THIAMINE-PHOSPHATE PYROPHOSPHORYLASE"/>
    <property type="match status" value="1"/>
</dbReference>
<dbReference type="Pfam" id="PF02581">
    <property type="entry name" value="TMP-TENI"/>
    <property type="match status" value="1"/>
</dbReference>
<dbReference type="SUPFAM" id="SSF51391">
    <property type="entry name" value="Thiamin phosphate synthase"/>
    <property type="match status" value="1"/>
</dbReference>
<protein>
    <recommendedName>
        <fullName evidence="1">Thiamine-phosphate synthase</fullName>
        <shortName evidence="1">TP synthase</shortName>
        <shortName evidence="1">TPS</shortName>
        <ecNumber evidence="1">2.5.1.3</ecNumber>
    </recommendedName>
    <alternativeName>
        <fullName evidence="1">Thiamine-phosphate pyrophosphorylase</fullName>
        <shortName evidence="1">TMP pyrophosphorylase</shortName>
        <shortName evidence="1">TMP-PPase</shortName>
    </alternativeName>
</protein>
<keyword id="KW-0460">Magnesium</keyword>
<keyword id="KW-0479">Metal-binding</keyword>
<keyword id="KW-1185">Reference proteome</keyword>
<keyword id="KW-0784">Thiamine biosynthesis</keyword>
<keyword id="KW-0808">Transferase</keyword>
<sequence>MQNKIQGVYLVTDRPLCLHHKLEEVVQMAASGGVSLVQLREKDSTSREFLELAIHLKFILSPFQVPLLINDRVDLCLASGADGVHLGQTDLPWLEARRILGKDAIIGLSIETKEDFATLTKEDPNPQLEYLAVSPVFDTPTKTNTKEALGLAGVRWLKEKTDIPVVAIGGINISNAKDVIGAGADMIAVVSAICSAKNPKEATVALRNQF</sequence>
<proteinExistence type="inferred from homology"/>
<evidence type="ECO:0000255" key="1">
    <source>
        <dbReference type="HAMAP-Rule" id="MF_00097"/>
    </source>
</evidence>
<gene>
    <name evidence="1" type="primary">thiE</name>
    <name type="ordered locus">LEPBI_I2715</name>
</gene>
<organism>
    <name type="scientific">Leptospira biflexa serovar Patoc (strain Patoc 1 / ATCC 23582 / Paris)</name>
    <dbReference type="NCBI Taxonomy" id="456481"/>
    <lineage>
        <taxon>Bacteria</taxon>
        <taxon>Pseudomonadati</taxon>
        <taxon>Spirochaetota</taxon>
        <taxon>Spirochaetia</taxon>
        <taxon>Leptospirales</taxon>
        <taxon>Leptospiraceae</taxon>
        <taxon>Leptospira</taxon>
    </lineage>
</organism>
<name>THIE_LEPBP</name>
<comment type="function">
    <text evidence="1">Condenses 4-methyl-5-(beta-hydroxyethyl)thiazole monophosphate (THZ-P) and 2-methyl-4-amino-5-hydroxymethyl pyrimidine pyrophosphate (HMP-PP) to form thiamine monophosphate (TMP).</text>
</comment>
<comment type="catalytic activity">
    <reaction evidence="1">
        <text>2-[(2R,5Z)-2-carboxy-4-methylthiazol-5(2H)-ylidene]ethyl phosphate + 4-amino-2-methyl-5-(diphosphooxymethyl)pyrimidine + 2 H(+) = thiamine phosphate + CO2 + diphosphate</text>
        <dbReference type="Rhea" id="RHEA:47844"/>
        <dbReference type="ChEBI" id="CHEBI:15378"/>
        <dbReference type="ChEBI" id="CHEBI:16526"/>
        <dbReference type="ChEBI" id="CHEBI:33019"/>
        <dbReference type="ChEBI" id="CHEBI:37575"/>
        <dbReference type="ChEBI" id="CHEBI:57841"/>
        <dbReference type="ChEBI" id="CHEBI:62899"/>
        <dbReference type="EC" id="2.5.1.3"/>
    </reaction>
</comment>
<comment type="catalytic activity">
    <reaction evidence="1">
        <text>2-(2-carboxy-4-methylthiazol-5-yl)ethyl phosphate + 4-amino-2-methyl-5-(diphosphooxymethyl)pyrimidine + 2 H(+) = thiamine phosphate + CO2 + diphosphate</text>
        <dbReference type="Rhea" id="RHEA:47848"/>
        <dbReference type="ChEBI" id="CHEBI:15378"/>
        <dbReference type="ChEBI" id="CHEBI:16526"/>
        <dbReference type="ChEBI" id="CHEBI:33019"/>
        <dbReference type="ChEBI" id="CHEBI:37575"/>
        <dbReference type="ChEBI" id="CHEBI:57841"/>
        <dbReference type="ChEBI" id="CHEBI:62890"/>
        <dbReference type="EC" id="2.5.1.3"/>
    </reaction>
</comment>
<comment type="catalytic activity">
    <reaction evidence="1">
        <text>4-methyl-5-(2-phosphooxyethyl)-thiazole + 4-amino-2-methyl-5-(diphosphooxymethyl)pyrimidine + H(+) = thiamine phosphate + diphosphate</text>
        <dbReference type="Rhea" id="RHEA:22328"/>
        <dbReference type="ChEBI" id="CHEBI:15378"/>
        <dbReference type="ChEBI" id="CHEBI:33019"/>
        <dbReference type="ChEBI" id="CHEBI:37575"/>
        <dbReference type="ChEBI" id="CHEBI:57841"/>
        <dbReference type="ChEBI" id="CHEBI:58296"/>
        <dbReference type="EC" id="2.5.1.3"/>
    </reaction>
</comment>
<comment type="cofactor">
    <cofactor evidence="1">
        <name>Mg(2+)</name>
        <dbReference type="ChEBI" id="CHEBI:18420"/>
    </cofactor>
    <text evidence="1">Binds 1 Mg(2+) ion per subunit.</text>
</comment>
<comment type="pathway">
    <text evidence="1">Cofactor biosynthesis; thiamine diphosphate biosynthesis; thiamine phosphate from 4-amino-2-methyl-5-diphosphomethylpyrimidine and 4-methyl-5-(2-phosphoethyl)-thiazole: step 1/1.</text>
</comment>
<comment type="similarity">
    <text evidence="1">Belongs to the thiamine-phosphate synthase family.</text>
</comment>
<reference key="1">
    <citation type="journal article" date="2008" name="PLoS ONE">
        <title>Genome sequence of the saprophyte Leptospira biflexa provides insights into the evolution of Leptospira and the pathogenesis of leptospirosis.</title>
        <authorList>
            <person name="Picardeau M."/>
            <person name="Bulach D.M."/>
            <person name="Bouchier C."/>
            <person name="Zuerner R.L."/>
            <person name="Zidane N."/>
            <person name="Wilson P.J."/>
            <person name="Creno S."/>
            <person name="Kuczek E.S."/>
            <person name="Bommezzadri S."/>
            <person name="Davis J.C."/>
            <person name="McGrath A."/>
            <person name="Johnson M.J."/>
            <person name="Boursaux-Eude C."/>
            <person name="Seemann T."/>
            <person name="Rouy Z."/>
            <person name="Coppel R.L."/>
            <person name="Rood J.I."/>
            <person name="Lajus A."/>
            <person name="Davies J.K."/>
            <person name="Medigue C."/>
            <person name="Adler B."/>
        </authorList>
    </citation>
    <scope>NUCLEOTIDE SEQUENCE [LARGE SCALE GENOMIC DNA]</scope>
    <source>
        <strain>Patoc 1 / ATCC 23582 / Paris</strain>
    </source>
</reference>
<accession>B0SMR9</accession>
<feature type="chain" id="PRO_1000093676" description="Thiamine-phosphate synthase">
    <location>
        <begin position="1"/>
        <end position="210"/>
    </location>
</feature>
<feature type="binding site" evidence="1">
    <location>
        <begin position="38"/>
        <end position="42"/>
    </location>
    <ligand>
        <name>4-amino-2-methyl-5-(diphosphooxymethyl)pyrimidine</name>
        <dbReference type="ChEBI" id="CHEBI:57841"/>
    </ligand>
</feature>
<feature type="binding site" evidence="1">
    <location>
        <position position="70"/>
    </location>
    <ligand>
        <name>4-amino-2-methyl-5-(diphosphooxymethyl)pyrimidine</name>
        <dbReference type="ChEBI" id="CHEBI:57841"/>
    </ligand>
</feature>
<feature type="binding site" evidence="1">
    <location>
        <position position="71"/>
    </location>
    <ligand>
        <name>Mg(2+)</name>
        <dbReference type="ChEBI" id="CHEBI:18420"/>
    </ligand>
</feature>
<feature type="binding site" evidence="1">
    <location>
        <position position="90"/>
    </location>
    <ligand>
        <name>Mg(2+)</name>
        <dbReference type="ChEBI" id="CHEBI:18420"/>
    </ligand>
</feature>
<feature type="binding site" evidence="1">
    <location>
        <position position="109"/>
    </location>
    <ligand>
        <name>4-amino-2-methyl-5-(diphosphooxymethyl)pyrimidine</name>
        <dbReference type="ChEBI" id="CHEBI:57841"/>
    </ligand>
</feature>
<feature type="binding site" evidence="1">
    <location>
        <begin position="139"/>
        <end position="141"/>
    </location>
    <ligand>
        <name>2-[(2R,5Z)-2-carboxy-4-methylthiazol-5(2H)-ylidene]ethyl phosphate</name>
        <dbReference type="ChEBI" id="CHEBI:62899"/>
    </ligand>
</feature>
<feature type="binding site" evidence="1">
    <location>
        <position position="142"/>
    </location>
    <ligand>
        <name>4-amino-2-methyl-5-(diphosphooxymethyl)pyrimidine</name>
        <dbReference type="ChEBI" id="CHEBI:57841"/>
    </ligand>
</feature>
<feature type="binding site" evidence="1">
    <location>
        <position position="170"/>
    </location>
    <ligand>
        <name>2-[(2R,5Z)-2-carboxy-4-methylthiazol-5(2H)-ylidene]ethyl phosphate</name>
        <dbReference type="ChEBI" id="CHEBI:62899"/>
    </ligand>
</feature>
<feature type="binding site" evidence="1">
    <location>
        <begin position="190"/>
        <end position="191"/>
    </location>
    <ligand>
        <name>2-[(2R,5Z)-2-carboxy-4-methylthiazol-5(2H)-ylidene]ethyl phosphate</name>
        <dbReference type="ChEBI" id="CHEBI:62899"/>
    </ligand>
</feature>